<sequence>MQQEIRNSNTPNTGSGNPVSNLSSALRQVHLGNSNTTTDQSNISIDYTSRAPQQQPLDELSRGAAGGPAAGGGPEGSNMVGASSAAQVTAFGGPSVVDSSRITKFFQNQPMEGYTLFSHRSAPNGFKVAIVLSEMGLNYNTIFLDFNLGEHRAPEFVAINPNARVPALIDHSLDNLSLWESGAIILHLANKYYRETGTPLLWSDNLAEQAQINSWLFFQTSGHAPMIGQALHFRYFHSQKVPSAVERYTDEVRRVYGVVEMALAERREALIMDLDSENAAAYSAGTTPLTQSRFFDYPVWLVGDHITIADLSFVPWNNVVDRIGINIKVEFPEVYKWTKHMMRRPAVIKALRGE</sequence>
<name>URE2_EREGS</name>
<organism>
    <name type="scientific">Eremothecium gossypii (strain ATCC 10895 / CBS 109.51 / FGSC 9923 / NRRL Y-1056)</name>
    <name type="common">Yeast</name>
    <name type="synonym">Ashbya gossypii</name>
    <dbReference type="NCBI Taxonomy" id="284811"/>
    <lineage>
        <taxon>Eukaryota</taxon>
        <taxon>Fungi</taxon>
        <taxon>Dikarya</taxon>
        <taxon>Ascomycota</taxon>
        <taxon>Saccharomycotina</taxon>
        <taxon>Saccharomycetes</taxon>
        <taxon>Saccharomycetales</taxon>
        <taxon>Saccharomycetaceae</taxon>
        <taxon>Eremothecium</taxon>
    </lineage>
</organism>
<keyword id="KW-0534">Nitrate assimilation</keyword>
<keyword id="KW-1185">Reference proteome</keyword>
<reference key="1">
    <citation type="journal article" date="2002" name="Proc. Natl. Acad. Sci. U.S.A.">
        <title>Conservation of a portion of the S. cerevisiae Ure2p prion domain that interacts with the full-length protein.</title>
        <authorList>
            <person name="Edskes H.K."/>
            <person name="Wickner R.B."/>
        </authorList>
    </citation>
    <scope>NUCLEOTIDE SEQUENCE [GENOMIC DNA]</scope>
    <source>
        <strain>ATCC 8717 / IMI 31268</strain>
    </source>
</reference>
<reference key="2">
    <citation type="journal article" date="2004" name="Science">
        <title>The Ashbya gossypii genome as a tool for mapping the ancient Saccharomyces cerevisiae genome.</title>
        <authorList>
            <person name="Dietrich F.S."/>
            <person name="Voegeli S."/>
            <person name="Brachat S."/>
            <person name="Lerch A."/>
            <person name="Gates K."/>
            <person name="Steiner S."/>
            <person name="Mohr C."/>
            <person name="Poehlmann R."/>
            <person name="Luedi P."/>
            <person name="Choi S."/>
            <person name="Wing R.A."/>
            <person name="Flavier A."/>
            <person name="Gaffney T.D."/>
            <person name="Philippsen P."/>
        </authorList>
    </citation>
    <scope>NUCLEOTIDE SEQUENCE [LARGE SCALE GENOMIC DNA]</scope>
    <source>
        <strain>ATCC 10895 / CBS 109.51 / FGSC 9923 / NRRL Y-1056</strain>
    </source>
</reference>
<reference key="3">
    <citation type="journal article" date="2013" name="G3 (Bethesda)">
        <title>Genomes of Ashbya fungi isolated from insects reveal four mating-type loci, numerous translocations, lack of transposons, and distinct gene duplications.</title>
        <authorList>
            <person name="Dietrich F.S."/>
            <person name="Voegeli S."/>
            <person name="Kuo S."/>
            <person name="Philippsen P."/>
        </authorList>
    </citation>
    <scope>GENOME REANNOTATION</scope>
    <source>
        <strain>ATCC 10895 / CBS 109.51 / FGSC 9923 / NRRL Y-1056</strain>
    </source>
</reference>
<accession>Q8NJR2</accession>
<comment type="function">
    <text evidence="1">Plays an important role in the cellular response to the nitrogen source. URE2 gene plays a major part in the repression of GLN1 and GDH2 genes by glutamine, and is required for the inactivation of glutamine synthetase. URE2 gene product may catalytically inactivate GLN3 in response to an increase in the intracellular concentration of glutamine (By similarity).</text>
</comment>
<comment type="subunit">
    <text evidence="1">Homodimer.</text>
</comment>
<comment type="similarity">
    <text evidence="3">Belongs to the GST superfamily.</text>
</comment>
<protein>
    <recommendedName>
        <fullName>Protein URE2</fullName>
    </recommendedName>
</protein>
<gene>
    <name type="primary">URE2</name>
    <name type="ordered locus">ABL195C</name>
</gene>
<proteinExistence type="inferred from homology"/>
<dbReference type="EMBL" id="AF525170">
    <property type="protein sequence ID" value="AAM91943.1"/>
    <property type="molecule type" value="Genomic_DNA"/>
</dbReference>
<dbReference type="EMBL" id="AE016815">
    <property type="protein sequence ID" value="AAS50576.1"/>
    <property type="molecule type" value="Genomic_DNA"/>
</dbReference>
<dbReference type="RefSeq" id="NP_982752.1">
    <property type="nucleotide sequence ID" value="NM_208105.1"/>
</dbReference>
<dbReference type="SMR" id="Q8NJR2"/>
<dbReference type="FunCoup" id="Q8NJR2">
    <property type="interactions" value="734"/>
</dbReference>
<dbReference type="STRING" id="284811.Q8NJR2"/>
<dbReference type="EnsemblFungi" id="AAS50576">
    <property type="protein sequence ID" value="AAS50576"/>
    <property type="gene ID" value="AGOS_ABL195C"/>
</dbReference>
<dbReference type="GeneID" id="4618831"/>
<dbReference type="KEGG" id="ago:AGOS_ABL195C"/>
<dbReference type="eggNOG" id="KOG0867">
    <property type="taxonomic scope" value="Eukaryota"/>
</dbReference>
<dbReference type="HOGENOM" id="CLU_011226_14_1_1"/>
<dbReference type="InParanoid" id="Q8NJR2"/>
<dbReference type="OMA" id="YEPHRID"/>
<dbReference type="OrthoDB" id="422574at2759"/>
<dbReference type="Proteomes" id="UP000000591">
    <property type="component" value="Chromosome II"/>
</dbReference>
<dbReference type="GO" id="GO:0005737">
    <property type="term" value="C:cytoplasm"/>
    <property type="evidence" value="ECO:0000318"/>
    <property type="project" value="GO_Central"/>
</dbReference>
<dbReference type="GO" id="GO:0004602">
    <property type="term" value="F:glutathione peroxidase activity"/>
    <property type="evidence" value="ECO:0007669"/>
    <property type="project" value="EnsemblFungi"/>
</dbReference>
<dbReference type="GO" id="GO:0004364">
    <property type="term" value="F:glutathione transferase activity"/>
    <property type="evidence" value="ECO:0000318"/>
    <property type="project" value="GO_Central"/>
</dbReference>
<dbReference type="GO" id="GO:0051219">
    <property type="term" value="F:phosphoprotein binding"/>
    <property type="evidence" value="ECO:0007669"/>
    <property type="project" value="EnsemblFungi"/>
</dbReference>
<dbReference type="GO" id="GO:0003714">
    <property type="term" value="F:transcription corepressor activity"/>
    <property type="evidence" value="ECO:0007669"/>
    <property type="project" value="InterPro"/>
</dbReference>
<dbReference type="GO" id="GO:0010621">
    <property type="term" value="P:negative regulation of transcription by transcription factor localization"/>
    <property type="evidence" value="ECO:0007669"/>
    <property type="project" value="EnsemblFungi"/>
</dbReference>
<dbReference type="GO" id="GO:0042128">
    <property type="term" value="P:nitrate assimilation"/>
    <property type="evidence" value="ECO:0007669"/>
    <property type="project" value="UniProtKB-KW"/>
</dbReference>
<dbReference type="GO" id="GO:0032447">
    <property type="term" value="P:protein urmylation"/>
    <property type="evidence" value="ECO:0007669"/>
    <property type="project" value="EnsemblFungi"/>
</dbReference>
<dbReference type="GO" id="GO:0006808">
    <property type="term" value="P:regulation of nitrogen utilization"/>
    <property type="evidence" value="ECO:0007669"/>
    <property type="project" value="EnsemblFungi"/>
</dbReference>
<dbReference type="CDD" id="cd10293">
    <property type="entry name" value="GST_C_Ure2p"/>
    <property type="match status" value="1"/>
</dbReference>
<dbReference type="CDD" id="cd03048">
    <property type="entry name" value="GST_N_Ure2p_like"/>
    <property type="match status" value="1"/>
</dbReference>
<dbReference type="FunFam" id="1.20.1050.10:FF:000034">
    <property type="entry name" value="Transcriptional regulator URE2"/>
    <property type="match status" value="1"/>
</dbReference>
<dbReference type="Gene3D" id="1.20.1050.10">
    <property type="match status" value="1"/>
</dbReference>
<dbReference type="Gene3D" id="3.40.30.10">
    <property type="entry name" value="Glutaredoxin"/>
    <property type="match status" value="1"/>
</dbReference>
<dbReference type="InterPro" id="IPR010987">
    <property type="entry name" value="Glutathione-S-Trfase_C-like"/>
</dbReference>
<dbReference type="InterPro" id="IPR036282">
    <property type="entry name" value="Glutathione-S-Trfase_C_sf"/>
</dbReference>
<dbReference type="InterPro" id="IPR040079">
    <property type="entry name" value="Glutathione_S-Trfase"/>
</dbReference>
<dbReference type="InterPro" id="IPR004045">
    <property type="entry name" value="Glutathione_S-Trfase_N"/>
</dbReference>
<dbReference type="InterPro" id="IPR004046">
    <property type="entry name" value="GST_C"/>
</dbReference>
<dbReference type="InterPro" id="IPR036249">
    <property type="entry name" value="Thioredoxin-like_sf"/>
</dbReference>
<dbReference type="InterPro" id="IPR017298">
    <property type="entry name" value="Ure2"/>
</dbReference>
<dbReference type="PANTHER" id="PTHR44051">
    <property type="entry name" value="GLUTATHIONE S-TRANSFERASE-RELATED"/>
    <property type="match status" value="1"/>
</dbReference>
<dbReference type="PANTHER" id="PTHR44051:SF3">
    <property type="entry name" value="TRANSCRIPTIONAL REGULATOR URE2"/>
    <property type="match status" value="1"/>
</dbReference>
<dbReference type="Pfam" id="PF00043">
    <property type="entry name" value="GST_C"/>
    <property type="match status" value="1"/>
</dbReference>
<dbReference type="Pfam" id="PF02798">
    <property type="entry name" value="GST_N"/>
    <property type="match status" value="1"/>
</dbReference>
<dbReference type="PIRSF" id="PIRSF037861">
    <property type="entry name" value="Prion_URE2"/>
    <property type="match status" value="1"/>
</dbReference>
<dbReference type="SFLD" id="SFLDS00019">
    <property type="entry name" value="Glutathione_Transferase_(cytos"/>
    <property type="match status" value="1"/>
</dbReference>
<dbReference type="SFLD" id="SFLDG00358">
    <property type="entry name" value="Main_(cytGST)"/>
    <property type="match status" value="1"/>
</dbReference>
<dbReference type="SUPFAM" id="SSF47616">
    <property type="entry name" value="GST C-terminal domain-like"/>
    <property type="match status" value="1"/>
</dbReference>
<dbReference type="SUPFAM" id="SSF52833">
    <property type="entry name" value="Thioredoxin-like"/>
    <property type="match status" value="1"/>
</dbReference>
<dbReference type="PROSITE" id="PS50405">
    <property type="entry name" value="GST_CTER"/>
    <property type="match status" value="1"/>
</dbReference>
<dbReference type="PROSITE" id="PS50404">
    <property type="entry name" value="GST_NTER"/>
    <property type="match status" value="1"/>
</dbReference>
<feature type="chain" id="PRO_0000186003" description="Protein URE2">
    <location>
        <begin position="1"/>
        <end position="354"/>
    </location>
</feature>
<feature type="domain" description="GST N-terminal">
    <location>
        <begin position="112"/>
        <end position="196"/>
    </location>
</feature>
<feature type="domain" description="GST C-terminal">
    <location>
        <begin position="205"/>
        <end position="354"/>
    </location>
</feature>
<feature type="region of interest" description="Disordered" evidence="2">
    <location>
        <begin position="1"/>
        <end position="80"/>
    </location>
</feature>
<feature type="compositionally biased region" description="Polar residues" evidence="2">
    <location>
        <begin position="1"/>
        <end position="56"/>
    </location>
</feature>
<feature type="compositionally biased region" description="Gly residues" evidence="2">
    <location>
        <begin position="64"/>
        <end position="75"/>
    </location>
</feature>
<evidence type="ECO:0000250" key="1"/>
<evidence type="ECO:0000256" key="2">
    <source>
        <dbReference type="SAM" id="MobiDB-lite"/>
    </source>
</evidence>
<evidence type="ECO:0000305" key="3"/>